<keyword id="KW-0137">Centromere</keyword>
<keyword id="KW-0156">Chromatin regulator</keyword>
<keyword id="KW-0158">Chromosome</keyword>
<keyword id="KW-0287">Flowering</keyword>
<keyword id="KW-0489">Methyltransferase</keyword>
<keyword id="KW-0539">Nucleus</keyword>
<keyword id="KW-1185">Reference proteome</keyword>
<keyword id="KW-0949">S-adenosyl-L-methionine</keyword>
<keyword id="KW-0808">Transferase</keyword>
<proteinExistence type="evidence at protein level"/>
<comment type="function">
    <text evidence="6">Histone methyltransferase involved in regulation of flowering time. Required for the expression of the SOC1/AGL20 gene. Required for histone H3 trimethylation on 'Lys-4' (H3K4me3) at the SOC1 locus. Prevents trimethylation on 'Lys-27' (H3K27me3) at the same locus.</text>
</comment>
<comment type="catalytic activity">
    <reaction evidence="7">
        <text>L-lysyl(4)-[histone H3] + 3 S-adenosyl-L-methionine = N(6),N(6),N(6)-trimethyl-L-lysyl(4)-[histone H3] + 3 S-adenosyl-L-homocysteine + 3 H(+)</text>
        <dbReference type="Rhea" id="RHEA:60260"/>
        <dbReference type="Rhea" id="RHEA-COMP:15537"/>
        <dbReference type="Rhea" id="RHEA-COMP:15547"/>
        <dbReference type="ChEBI" id="CHEBI:15378"/>
        <dbReference type="ChEBI" id="CHEBI:29969"/>
        <dbReference type="ChEBI" id="CHEBI:57856"/>
        <dbReference type="ChEBI" id="CHEBI:59789"/>
        <dbReference type="ChEBI" id="CHEBI:61961"/>
        <dbReference type="EC" id="2.1.1.354"/>
    </reaction>
</comment>
<comment type="subcellular location">
    <subcellularLocation>
        <location evidence="1">Nucleus</location>
    </subcellularLocation>
    <subcellularLocation>
        <location evidence="1">Chromosome</location>
        <location evidence="1">Centromere</location>
    </subcellularLocation>
    <text evidence="1">Associates with centromeric constitutive heterochromatin.</text>
</comment>
<comment type="disruption phenotype">
    <text evidence="6">Late flowering.</text>
</comment>
<comment type="similarity">
    <text evidence="3">Belongs to the class V-like SAM-binding methyltransferase superfamily. Histone-lysine methyltransferase family. SET2 subfamily.</text>
</comment>
<comment type="sequence caution" evidence="7">
    <conflict type="erroneous gene model prediction">
        <sequence resource="EMBL-CDS" id="AAF04434"/>
    </conflict>
</comment>
<feature type="chain" id="PRO_0000233370" description="Histone-lysine N-methyltransferase ASHH1">
    <location>
        <begin position="1"/>
        <end position="492"/>
    </location>
</feature>
<feature type="domain" description="AWS" evidence="4">
    <location>
        <begin position="36"/>
        <end position="87"/>
    </location>
</feature>
<feature type="domain" description="SET" evidence="3">
    <location>
        <begin position="84"/>
        <end position="206"/>
    </location>
</feature>
<feature type="domain" description="Post-SET" evidence="2">
    <location>
        <begin position="213"/>
        <end position="229"/>
    </location>
</feature>
<feature type="region of interest" description="Disordered" evidence="5">
    <location>
        <begin position="259"/>
        <end position="340"/>
    </location>
</feature>
<feature type="compositionally biased region" description="Polar residues" evidence="5">
    <location>
        <begin position="266"/>
        <end position="275"/>
    </location>
</feature>
<feature type="compositionally biased region" description="Basic and acidic residues" evidence="5">
    <location>
        <begin position="277"/>
        <end position="290"/>
    </location>
</feature>
<feature type="compositionally biased region" description="Polar residues" evidence="5">
    <location>
        <begin position="291"/>
        <end position="306"/>
    </location>
</feature>
<feature type="compositionally biased region" description="Basic and acidic residues" evidence="5">
    <location>
        <begin position="317"/>
        <end position="326"/>
    </location>
</feature>
<feature type="compositionally biased region" description="Polar residues" evidence="5">
    <location>
        <begin position="328"/>
        <end position="339"/>
    </location>
</feature>
<dbReference type="EC" id="2.1.1.354" evidence="7"/>
<dbReference type="EMBL" id="AC010718">
    <property type="protein sequence ID" value="AAF04434.1"/>
    <property type="status" value="ALT_SEQ"/>
    <property type="molecule type" value="Genomic_DNA"/>
</dbReference>
<dbReference type="EMBL" id="CP002684">
    <property type="protein sequence ID" value="AEE35879.1"/>
    <property type="molecule type" value="Genomic_DNA"/>
</dbReference>
<dbReference type="EMBL" id="CP002684">
    <property type="protein sequence ID" value="AEE35880.1"/>
    <property type="molecule type" value="Genomic_DNA"/>
</dbReference>
<dbReference type="EMBL" id="BT001913">
    <property type="protein sequence ID" value="AAN71912.1"/>
    <property type="molecule type" value="mRNA"/>
</dbReference>
<dbReference type="EMBL" id="AB493538">
    <property type="protein sequence ID" value="BAH30376.1"/>
    <property type="molecule type" value="mRNA"/>
</dbReference>
<dbReference type="EMBL" id="AF408059">
    <property type="protein sequence ID" value="AAL01110.1"/>
    <property type="molecule type" value="mRNA"/>
</dbReference>
<dbReference type="PIR" id="E96795">
    <property type="entry name" value="E96795"/>
</dbReference>
<dbReference type="RefSeq" id="NP_177797.2">
    <property type="nucleotide sequence ID" value="NM_106321.4"/>
</dbReference>
<dbReference type="RefSeq" id="NP_974158.1">
    <property type="nucleotide sequence ID" value="NM_202429.2"/>
</dbReference>
<dbReference type="SMR" id="Q84WW6"/>
<dbReference type="BioGRID" id="29224">
    <property type="interactions" value="7"/>
</dbReference>
<dbReference type="FunCoup" id="Q84WW6">
    <property type="interactions" value="1089"/>
</dbReference>
<dbReference type="IntAct" id="Q84WW6">
    <property type="interactions" value="4"/>
</dbReference>
<dbReference type="STRING" id="3702.Q84WW6"/>
<dbReference type="GlyGen" id="Q84WW6">
    <property type="glycosylation" value="1 site"/>
</dbReference>
<dbReference type="iPTMnet" id="Q84WW6"/>
<dbReference type="PaxDb" id="3702-AT1G76710.2"/>
<dbReference type="ProteomicsDB" id="246680"/>
<dbReference type="EnsemblPlants" id="AT1G76710.1">
    <property type="protein sequence ID" value="AT1G76710.1"/>
    <property type="gene ID" value="AT1G76710"/>
</dbReference>
<dbReference type="EnsemblPlants" id="AT1G76710.2">
    <property type="protein sequence ID" value="AT1G76710.2"/>
    <property type="gene ID" value="AT1G76710"/>
</dbReference>
<dbReference type="GeneID" id="844005"/>
<dbReference type="Gramene" id="AT1G76710.1">
    <property type="protein sequence ID" value="AT1G76710.1"/>
    <property type="gene ID" value="AT1G76710"/>
</dbReference>
<dbReference type="Gramene" id="AT1G76710.2">
    <property type="protein sequence ID" value="AT1G76710.2"/>
    <property type="gene ID" value="AT1G76710"/>
</dbReference>
<dbReference type="KEGG" id="ath:AT1G76710"/>
<dbReference type="Araport" id="AT1G76710"/>
<dbReference type="TAIR" id="AT1G76710">
    <property type="gene designation" value="ASHH1"/>
</dbReference>
<dbReference type="eggNOG" id="KOG4442">
    <property type="taxonomic scope" value="Eukaryota"/>
</dbReference>
<dbReference type="HOGENOM" id="CLU_026268_0_0_1"/>
<dbReference type="InParanoid" id="Q84WW6"/>
<dbReference type="OrthoDB" id="2422440at2759"/>
<dbReference type="PhylomeDB" id="Q84WW6"/>
<dbReference type="PRO" id="PR:Q84WW6"/>
<dbReference type="Proteomes" id="UP000006548">
    <property type="component" value="Chromosome 1"/>
</dbReference>
<dbReference type="ExpressionAtlas" id="Q84WW6">
    <property type="expression patterns" value="baseline and differential"/>
</dbReference>
<dbReference type="GO" id="GO:0000775">
    <property type="term" value="C:chromosome, centromeric region"/>
    <property type="evidence" value="ECO:0007669"/>
    <property type="project" value="UniProtKB-SubCell"/>
</dbReference>
<dbReference type="GO" id="GO:0005634">
    <property type="term" value="C:nucleus"/>
    <property type="evidence" value="ECO:0000314"/>
    <property type="project" value="TAIR"/>
</dbReference>
<dbReference type="GO" id="GO:0140999">
    <property type="term" value="F:histone H3K4 trimethyltransferase activity"/>
    <property type="evidence" value="ECO:0007669"/>
    <property type="project" value="UniProtKB-EC"/>
</dbReference>
<dbReference type="GO" id="GO:0006281">
    <property type="term" value="P:DNA repair"/>
    <property type="evidence" value="ECO:0000315"/>
    <property type="project" value="TAIR"/>
</dbReference>
<dbReference type="GO" id="GO:0009908">
    <property type="term" value="P:flower development"/>
    <property type="evidence" value="ECO:0007669"/>
    <property type="project" value="UniProtKB-KW"/>
</dbReference>
<dbReference type="GO" id="GO:0032259">
    <property type="term" value="P:methylation"/>
    <property type="evidence" value="ECO:0007669"/>
    <property type="project" value="UniProtKB-KW"/>
</dbReference>
<dbReference type="GO" id="GO:0010224">
    <property type="term" value="P:response to UV-B"/>
    <property type="evidence" value="ECO:0000270"/>
    <property type="project" value="TAIR"/>
</dbReference>
<dbReference type="GO" id="GO:0010228">
    <property type="term" value="P:vegetative to reproductive phase transition of meristem"/>
    <property type="evidence" value="ECO:0000315"/>
    <property type="project" value="TAIR"/>
</dbReference>
<dbReference type="CDD" id="cd10531">
    <property type="entry name" value="SET_SETD2-like"/>
    <property type="match status" value="1"/>
</dbReference>
<dbReference type="FunFam" id="2.170.270.10:FF:000028">
    <property type="entry name" value="Histone-lysine N-methyltransferase"/>
    <property type="match status" value="1"/>
</dbReference>
<dbReference type="Gene3D" id="2.170.270.10">
    <property type="entry name" value="SET domain"/>
    <property type="match status" value="1"/>
</dbReference>
<dbReference type="InterPro" id="IPR006560">
    <property type="entry name" value="AWS_dom"/>
</dbReference>
<dbReference type="InterPro" id="IPR003616">
    <property type="entry name" value="Post-SET_dom"/>
</dbReference>
<dbReference type="InterPro" id="IPR050777">
    <property type="entry name" value="SET2_Histone-Lys_MeTrsfase"/>
</dbReference>
<dbReference type="InterPro" id="IPR001214">
    <property type="entry name" value="SET_dom"/>
</dbReference>
<dbReference type="InterPro" id="IPR046341">
    <property type="entry name" value="SET_dom_sf"/>
</dbReference>
<dbReference type="PANTHER" id="PTHR22884">
    <property type="entry name" value="SET DOMAIN PROTEINS"/>
    <property type="match status" value="1"/>
</dbReference>
<dbReference type="Pfam" id="PF17907">
    <property type="entry name" value="AWS"/>
    <property type="match status" value="1"/>
</dbReference>
<dbReference type="Pfam" id="PF00856">
    <property type="entry name" value="SET"/>
    <property type="match status" value="1"/>
</dbReference>
<dbReference type="SMART" id="SM00570">
    <property type="entry name" value="AWS"/>
    <property type="match status" value="1"/>
</dbReference>
<dbReference type="SMART" id="SM00508">
    <property type="entry name" value="PostSET"/>
    <property type="match status" value="1"/>
</dbReference>
<dbReference type="SMART" id="SM00317">
    <property type="entry name" value="SET"/>
    <property type="match status" value="1"/>
</dbReference>
<dbReference type="SUPFAM" id="SSF82199">
    <property type="entry name" value="SET domain"/>
    <property type="match status" value="1"/>
</dbReference>
<dbReference type="PROSITE" id="PS51215">
    <property type="entry name" value="AWS"/>
    <property type="match status" value="1"/>
</dbReference>
<dbReference type="PROSITE" id="PS50868">
    <property type="entry name" value="POST_SET"/>
    <property type="match status" value="1"/>
</dbReference>
<dbReference type="PROSITE" id="PS50280">
    <property type="entry name" value="SET"/>
    <property type="match status" value="1"/>
</dbReference>
<protein>
    <recommendedName>
        <fullName evidence="7">Histone-lysine N-methyltransferase ASHH1</fullName>
        <ecNumber evidence="7">2.1.1.354</ecNumber>
    </recommendedName>
    <alternativeName>
        <fullName>ASH1 homolog 1</fullName>
    </alternativeName>
    <alternativeName>
        <fullName>Protein SET DOMAIN GROUP 26</fullName>
    </alternativeName>
</protein>
<evidence type="ECO:0000250" key="1"/>
<evidence type="ECO:0000255" key="2">
    <source>
        <dbReference type="PROSITE-ProRule" id="PRU00155"/>
    </source>
</evidence>
<evidence type="ECO:0000255" key="3">
    <source>
        <dbReference type="PROSITE-ProRule" id="PRU00190"/>
    </source>
</evidence>
<evidence type="ECO:0000255" key="4">
    <source>
        <dbReference type="PROSITE-ProRule" id="PRU00562"/>
    </source>
</evidence>
<evidence type="ECO:0000256" key="5">
    <source>
        <dbReference type="SAM" id="MobiDB-lite"/>
    </source>
</evidence>
<evidence type="ECO:0000269" key="6">
    <source>
    </source>
</evidence>
<evidence type="ECO:0000305" key="7"/>
<organism>
    <name type="scientific">Arabidopsis thaliana</name>
    <name type="common">Mouse-ear cress</name>
    <dbReference type="NCBI Taxonomy" id="3702"/>
    <lineage>
        <taxon>Eukaryota</taxon>
        <taxon>Viridiplantae</taxon>
        <taxon>Streptophyta</taxon>
        <taxon>Embryophyta</taxon>
        <taxon>Tracheophyta</taxon>
        <taxon>Spermatophyta</taxon>
        <taxon>Magnoliopsida</taxon>
        <taxon>eudicotyledons</taxon>
        <taxon>Gunneridae</taxon>
        <taxon>Pentapetalae</taxon>
        <taxon>rosids</taxon>
        <taxon>malvids</taxon>
        <taxon>Brassicales</taxon>
        <taxon>Brassicaceae</taxon>
        <taxon>Camelineae</taxon>
        <taxon>Arabidopsis</taxon>
    </lineage>
</organism>
<gene>
    <name type="primary">ASHH1</name>
    <name type="synonym">SDG26</name>
    <name type="synonym">SET26</name>
    <name type="ordered locus">At1g76710</name>
    <name type="ORF">F28O16.8</name>
</gene>
<reference key="1">
    <citation type="journal article" date="2000" name="Nature">
        <title>Sequence and analysis of chromosome 1 of the plant Arabidopsis thaliana.</title>
        <authorList>
            <person name="Theologis A."/>
            <person name="Ecker J.R."/>
            <person name="Palm C.J."/>
            <person name="Federspiel N.A."/>
            <person name="Kaul S."/>
            <person name="White O."/>
            <person name="Alonso J."/>
            <person name="Altafi H."/>
            <person name="Araujo R."/>
            <person name="Bowman C.L."/>
            <person name="Brooks S.Y."/>
            <person name="Buehler E."/>
            <person name="Chan A."/>
            <person name="Chao Q."/>
            <person name="Chen H."/>
            <person name="Cheuk R.F."/>
            <person name="Chin C.W."/>
            <person name="Chung M.K."/>
            <person name="Conn L."/>
            <person name="Conway A.B."/>
            <person name="Conway A.R."/>
            <person name="Creasy T.H."/>
            <person name="Dewar K."/>
            <person name="Dunn P."/>
            <person name="Etgu P."/>
            <person name="Feldblyum T.V."/>
            <person name="Feng J.-D."/>
            <person name="Fong B."/>
            <person name="Fujii C.Y."/>
            <person name="Gill J.E."/>
            <person name="Goldsmith A.D."/>
            <person name="Haas B."/>
            <person name="Hansen N.F."/>
            <person name="Hughes B."/>
            <person name="Huizar L."/>
            <person name="Hunter J.L."/>
            <person name="Jenkins J."/>
            <person name="Johnson-Hopson C."/>
            <person name="Khan S."/>
            <person name="Khaykin E."/>
            <person name="Kim C.J."/>
            <person name="Koo H.L."/>
            <person name="Kremenetskaia I."/>
            <person name="Kurtz D.B."/>
            <person name="Kwan A."/>
            <person name="Lam B."/>
            <person name="Langin-Hooper S."/>
            <person name="Lee A."/>
            <person name="Lee J.M."/>
            <person name="Lenz C.A."/>
            <person name="Li J.H."/>
            <person name="Li Y.-P."/>
            <person name="Lin X."/>
            <person name="Liu S.X."/>
            <person name="Liu Z.A."/>
            <person name="Luros J.S."/>
            <person name="Maiti R."/>
            <person name="Marziali A."/>
            <person name="Militscher J."/>
            <person name="Miranda M."/>
            <person name="Nguyen M."/>
            <person name="Nierman W.C."/>
            <person name="Osborne B.I."/>
            <person name="Pai G."/>
            <person name="Peterson J."/>
            <person name="Pham P.K."/>
            <person name="Rizzo M."/>
            <person name="Rooney T."/>
            <person name="Rowley D."/>
            <person name="Sakano H."/>
            <person name="Salzberg S.L."/>
            <person name="Schwartz J.R."/>
            <person name="Shinn P."/>
            <person name="Southwick A.M."/>
            <person name="Sun H."/>
            <person name="Tallon L.J."/>
            <person name="Tambunga G."/>
            <person name="Toriumi M.J."/>
            <person name="Town C.D."/>
            <person name="Utterback T."/>
            <person name="Van Aken S."/>
            <person name="Vaysberg M."/>
            <person name="Vysotskaia V.S."/>
            <person name="Walker M."/>
            <person name="Wu D."/>
            <person name="Yu G."/>
            <person name="Fraser C.M."/>
            <person name="Venter J.C."/>
            <person name="Davis R.W."/>
        </authorList>
    </citation>
    <scope>NUCLEOTIDE SEQUENCE [LARGE SCALE GENOMIC DNA]</scope>
    <source>
        <strain>cv. Columbia</strain>
    </source>
</reference>
<reference key="2">
    <citation type="journal article" date="2017" name="Plant J.">
        <title>Araport11: a complete reannotation of the Arabidopsis thaliana reference genome.</title>
        <authorList>
            <person name="Cheng C.Y."/>
            <person name="Krishnakumar V."/>
            <person name="Chan A.P."/>
            <person name="Thibaud-Nissen F."/>
            <person name="Schobel S."/>
            <person name="Town C.D."/>
        </authorList>
    </citation>
    <scope>GENOME REANNOTATION</scope>
    <source>
        <strain>cv. Columbia</strain>
    </source>
</reference>
<reference key="3">
    <citation type="journal article" date="2003" name="Science">
        <title>Empirical analysis of transcriptional activity in the Arabidopsis genome.</title>
        <authorList>
            <person name="Yamada K."/>
            <person name="Lim J."/>
            <person name="Dale J.M."/>
            <person name="Chen H."/>
            <person name="Shinn P."/>
            <person name="Palm C.J."/>
            <person name="Southwick A.M."/>
            <person name="Wu H.C."/>
            <person name="Kim C.J."/>
            <person name="Nguyen M."/>
            <person name="Pham P.K."/>
            <person name="Cheuk R.F."/>
            <person name="Karlin-Newmann G."/>
            <person name="Liu S.X."/>
            <person name="Lam B."/>
            <person name="Sakano H."/>
            <person name="Wu T."/>
            <person name="Yu G."/>
            <person name="Miranda M."/>
            <person name="Quach H.L."/>
            <person name="Tripp M."/>
            <person name="Chang C.H."/>
            <person name="Lee J.M."/>
            <person name="Toriumi M.J."/>
            <person name="Chan M.M."/>
            <person name="Tang C.C."/>
            <person name="Onodera C.S."/>
            <person name="Deng J.M."/>
            <person name="Akiyama K."/>
            <person name="Ansari Y."/>
            <person name="Arakawa T."/>
            <person name="Banh J."/>
            <person name="Banno F."/>
            <person name="Bowser L."/>
            <person name="Brooks S.Y."/>
            <person name="Carninci P."/>
            <person name="Chao Q."/>
            <person name="Choy N."/>
            <person name="Enju A."/>
            <person name="Goldsmith A.D."/>
            <person name="Gurjal M."/>
            <person name="Hansen N.F."/>
            <person name="Hayashizaki Y."/>
            <person name="Johnson-Hopson C."/>
            <person name="Hsuan V.W."/>
            <person name="Iida K."/>
            <person name="Karnes M."/>
            <person name="Khan S."/>
            <person name="Koesema E."/>
            <person name="Ishida J."/>
            <person name="Jiang P.X."/>
            <person name="Jones T."/>
            <person name="Kawai J."/>
            <person name="Kamiya A."/>
            <person name="Meyers C."/>
            <person name="Nakajima M."/>
            <person name="Narusaka M."/>
            <person name="Seki M."/>
            <person name="Sakurai T."/>
            <person name="Satou M."/>
            <person name="Tamse R."/>
            <person name="Vaysberg M."/>
            <person name="Wallender E.K."/>
            <person name="Wong C."/>
            <person name="Yamamura Y."/>
            <person name="Yuan S."/>
            <person name="Shinozaki K."/>
            <person name="Davis R.W."/>
            <person name="Theologis A."/>
            <person name="Ecker J.R."/>
        </authorList>
    </citation>
    <scope>NUCLEOTIDE SEQUENCE [LARGE SCALE MRNA]</scope>
    <source>
        <strain>cv. Columbia</strain>
    </source>
</reference>
<reference key="4">
    <citation type="submission" date="2009-03" db="EMBL/GenBank/DDBJ databases">
        <title>ORF cloning and analysis of Arabidopsis transcription factor genes.</title>
        <authorList>
            <person name="Fujita M."/>
            <person name="Mizukado S."/>
            <person name="Seki M."/>
            <person name="Shinozaki K."/>
            <person name="Mitsuda N."/>
            <person name="Takiguchi Y."/>
            <person name="Takagi M."/>
        </authorList>
    </citation>
    <scope>NUCLEOTIDE SEQUENCE [LARGE SCALE MRNA]</scope>
</reference>
<reference key="5">
    <citation type="journal article" date="2001" name="Nucleic Acids Res.">
        <title>The Arabidopsis thaliana genome contains at least 29 active genes encoding SET domain proteins that can be assigned to four evolutionarily conserved classes.</title>
        <authorList>
            <person name="Baumbusch L.O."/>
            <person name="Thorstensen T."/>
            <person name="Krauss V."/>
            <person name="Fischer A."/>
            <person name="Naumann K."/>
            <person name="Assalkhou R."/>
            <person name="Schulz I."/>
            <person name="Reuter G."/>
            <person name="Aalen R.B."/>
        </authorList>
    </citation>
    <scope>NUCLEOTIDE SEQUENCE [MRNA] OF 83-311</scope>
    <scope>NOMENCLATURE</scope>
</reference>
<reference key="6">
    <citation type="journal article" date="2009" name="J. Proteomics">
        <title>Phosphoproteomic analysis of nuclei-enriched fractions from Arabidopsis thaliana.</title>
        <authorList>
            <person name="Jones A.M.E."/>
            <person name="MacLean D."/>
            <person name="Studholme D.J."/>
            <person name="Serna-Sanz A."/>
            <person name="Andreasson E."/>
            <person name="Rathjen J.P."/>
            <person name="Peck S.C."/>
        </authorList>
    </citation>
    <scope>IDENTIFICATION BY MASS SPECTROMETRY [LARGE SCALE ANALYSIS]</scope>
    <source>
        <strain>cv. Columbia</strain>
    </source>
</reference>
<reference key="7">
    <citation type="journal article" date="2015" name="Plant J.">
        <title>The trxG family histone methyltransferase SET DOMAIN GROUP 26 promotes flowering via a distinctive genetic pathway.</title>
        <authorList>
            <person name="Berr A."/>
            <person name="Shafiq S."/>
            <person name="Pinon V."/>
            <person name="Dong A."/>
            <person name="Shen W."/>
        </authorList>
    </citation>
    <scope>FUNCTION</scope>
    <scope>DISRUPTION PHENOTYPE</scope>
</reference>
<name>ASHH1_ARATH</name>
<sequence length="492" mass="55285">MQFSCDPDQEGDELPQYEHIYQNDFSYRKHKKQKEEDISICECKFDFGDPDSACGERCLNVITNTECTPGYCPCGVYCKNQKFQKCEYAKTKLIKCEGRGWGLVALEEIKAGQFIMEYCGEVISWKEAKKRAQTYETHGVKDAYIISLNASEAIDATKKGSLARFINHSCRPNCETRKWNVLGEVRVGIFAKESISPRTELAYDYNFEWYGGAKVRCLCGAVACSGFLGAKSRGFQEDTYVWEDGDDRYSVDKIPVYDSAEDELTSEPSKNGESNTNEEKEKDISTENHLESTALNIQQQSDSTPTPMEEDVVTETVKTETSEDMKLLSQNSQEDSSPKTAIVSRVHGNISKIKSESLPKKRGRPFSGGKTKNVAQKHVDIANVVQLLATKEAQDEVLKYEEVKKEAAVRLSSLYDEIRPAIEEHERDSQDSVATSVAEKWIQASCNKLKAEFDLYSSVIKNIASTPIKPQDTKTKVAEAGNEDHIKLLEAK</sequence>
<accession>Q84WW6</accession>
<accession>C0SV35</accession>
<accession>Q945S9</accession>
<accession>Q9SRE2</accession>